<reference key="1">
    <citation type="journal article" date="2002" name="Environ. Microbiol.">
        <title>Complete genome sequence and comparative analysis of the metabolically versatile Pseudomonas putida KT2440.</title>
        <authorList>
            <person name="Nelson K.E."/>
            <person name="Weinel C."/>
            <person name="Paulsen I.T."/>
            <person name="Dodson R.J."/>
            <person name="Hilbert H."/>
            <person name="Martins dos Santos V.A.P."/>
            <person name="Fouts D.E."/>
            <person name="Gill S.R."/>
            <person name="Pop M."/>
            <person name="Holmes M."/>
            <person name="Brinkac L.M."/>
            <person name="Beanan M.J."/>
            <person name="DeBoy R.T."/>
            <person name="Daugherty S.C."/>
            <person name="Kolonay J.F."/>
            <person name="Madupu R."/>
            <person name="Nelson W.C."/>
            <person name="White O."/>
            <person name="Peterson J.D."/>
            <person name="Khouri H.M."/>
            <person name="Hance I."/>
            <person name="Chris Lee P."/>
            <person name="Holtzapple E.K."/>
            <person name="Scanlan D."/>
            <person name="Tran K."/>
            <person name="Moazzez A."/>
            <person name="Utterback T.R."/>
            <person name="Rizzo M."/>
            <person name="Lee K."/>
            <person name="Kosack D."/>
            <person name="Moestl D."/>
            <person name="Wedler H."/>
            <person name="Lauber J."/>
            <person name="Stjepandic D."/>
            <person name="Hoheisel J."/>
            <person name="Straetz M."/>
            <person name="Heim S."/>
            <person name="Kiewitz C."/>
            <person name="Eisen J.A."/>
            <person name="Timmis K.N."/>
            <person name="Duesterhoeft A."/>
            <person name="Tuemmler B."/>
            <person name="Fraser C.M."/>
        </authorList>
    </citation>
    <scope>NUCLEOTIDE SEQUENCE [LARGE SCALE GENOMIC DNA]</scope>
    <source>
        <strain>ATCC 47054 / DSM 6125 / CFBP 8728 / NCIMB 11950 / KT2440</strain>
    </source>
</reference>
<gene>
    <name evidence="1" type="primary">hmp</name>
    <name type="synonym">hmpA</name>
    <name type="ordered locus">PP_0808</name>
</gene>
<sequence>MLNAEQRAIIKATVPLLESGGEALTTHFYKMMLSEYPEVRPLFNQAHQASGDQPRALANGVLMYARHIDQLEQLGGLVGQIINKHVALQILPEHYPIVGSCLLRAIEEVLGKDIATPAVIDAWGAAYGQLADILIGAEENLYKEKEEAEGGWRGTREFRLVRREQESSEIVSFYFAPVDGMPVLKAEPGQYIGLKLDIDGAEQRRNYSLSALCDGKEYRISVKREAGGKVSNYLHDELKVGDTLQLFPPAGDFTLAASDKPLVLISGGVGITPTLAMLQAALQTRREVHFIHCARNGAVHAFRDWIDGLAARHPQLKRFYCYAEPEGGAAADAVGLLSEDLLAEWLPQERDVDAYFLGPKGFMAAVKRQLKGLGVPEQQSRYEFFGPAAALE</sequence>
<dbReference type="EC" id="1.14.12.17" evidence="1"/>
<dbReference type="EMBL" id="AE015451">
    <property type="protein sequence ID" value="AAN66433.1"/>
    <property type="molecule type" value="Genomic_DNA"/>
</dbReference>
<dbReference type="RefSeq" id="NP_742969.1">
    <property type="nucleotide sequence ID" value="NC_002947.4"/>
</dbReference>
<dbReference type="RefSeq" id="WP_010952044.1">
    <property type="nucleotide sequence ID" value="NZ_CP169744.1"/>
</dbReference>
<dbReference type="SMR" id="Q88PP0"/>
<dbReference type="STRING" id="160488.PP_0808"/>
<dbReference type="PaxDb" id="160488-PP_0808"/>
<dbReference type="GeneID" id="83678160"/>
<dbReference type="KEGG" id="ppu:PP_0808"/>
<dbReference type="PATRIC" id="fig|160488.4.peg.866"/>
<dbReference type="eggNOG" id="COG1017">
    <property type="taxonomic scope" value="Bacteria"/>
</dbReference>
<dbReference type="eggNOG" id="COG1018">
    <property type="taxonomic scope" value="Bacteria"/>
</dbReference>
<dbReference type="HOGENOM" id="CLU_003827_12_0_6"/>
<dbReference type="OrthoDB" id="9801223at2"/>
<dbReference type="PhylomeDB" id="Q88PP0"/>
<dbReference type="BioCyc" id="PPUT160488:G1G01-883-MONOMER"/>
<dbReference type="Proteomes" id="UP000000556">
    <property type="component" value="Chromosome"/>
</dbReference>
<dbReference type="GO" id="GO:0071949">
    <property type="term" value="F:FAD binding"/>
    <property type="evidence" value="ECO:0007669"/>
    <property type="project" value="InterPro"/>
</dbReference>
<dbReference type="GO" id="GO:0020037">
    <property type="term" value="F:heme binding"/>
    <property type="evidence" value="ECO:0007669"/>
    <property type="project" value="InterPro"/>
</dbReference>
<dbReference type="GO" id="GO:0046872">
    <property type="term" value="F:metal ion binding"/>
    <property type="evidence" value="ECO:0007669"/>
    <property type="project" value="UniProtKB-KW"/>
</dbReference>
<dbReference type="GO" id="GO:0008941">
    <property type="term" value="F:nitric oxide dioxygenase NAD(P)H activity"/>
    <property type="evidence" value="ECO:0007669"/>
    <property type="project" value="UniProtKB-UniRule"/>
</dbReference>
<dbReference type="GO" id="GO:0019825">
    <property type="term" value="F:oxygen binding"/>
    <property type="evidence" value="ECO:0007669"/>
    <property type="project" value="InterPro"/>
</dbReference>
<dbReference type="GO" id="GO:0005344">
    <property type="term" value="F:oxygen carrier activity"/>
    <property type="evidence" value="ECO:0007669"/>
    <property type="project" value="UniProtKB-UniRule"/>
</dbReference>
<dbReference type="GO" id="GO:0071500">
    <property type="term" value="P:cellular response to nitrosative stress"/>
    <property type="evidence" value="ECO:0007669"/>
    <property type="project" value="TreeGrafter"/>
</dbReference>
<dbReference type="GO" id="GO:0046210">
    <property type="term" value="P:nitric oxide catabolic process"/>
    <property type="evidence" value="ECO:0007669"/>
    <property type="project" value="TreeGrafter"/>
</dbReference>
<dbReference type="GO" id="GO:0009636">
    <property type="term" value="P:response to toxic substance"/>
    <property type="evidence" value="ECO:0007669"/>
    <property type="project" value="UniProtKB-KW"/>
</dbReference>
<dbReference type="CDD" id="cd06184">
    <property type="entry name" value="flavohem_like_fad_nad_binding"/>
    <property type="match status" value="1"/>
</dbReference>
<dbReference type="CDD" id="cd14780">
    <property type="entry name" value="HmpPa-globin-like"/>
    <property type="match status" value="1"/>
</dbReference>
<dbReference type="FunFam" id="1.10.490.10:FF:000003">
    <property type="entry name" value="Flavohemoprotein"/>
    <property type="match status" value="1"/>
</dbReference>
<dbReference type="FunFam" id="2.40.30.10:FF:000034">
    <property type="entry name" value="Flavohemoprotein"/>
    <property type="match status" value="1"/>
</dbReference>
<dbReference type="FunFam" id="3.40.50.80:FF:000010">
    <property type="entry name" value="Flavohemoprotein"/>
    <property type="match status" value="1"/>
</dbReference>
<dbReference type="Gene3D" id="1.10.490.10">
    <property type="entry name" value="Globins"/>
    <property type="match status" value="1"/>
</dbReference>
<dbReference type="Gene3D" id="3.40.50.80">
    <property type="entry name" value="Nucleotide-binding domain of ferredoxin-NADP reductase (FNR) module"/>
    <property type="match status" value="1"/>
</dbReference>
<dbReference type="Gene3D" id="2.40.30.10">
    <property type="entry name" value="Translation factors"/>
    <property type="match status" value="1"/>
</dbReference>
<dbReference type="HAMAP" id="MF_01252">
    <property type="entry name" value="Hmp"/>
    <property type="match status" value="1"/>
</dbReference>
<dbReference type="InterPro" id="IPR008333">
    <property type="entry name" value="Cbr1-like_FAD-bd_dom"/>
</dbReference>
<dbReference type="InterPro" id="IPR017927">
    <property type="entry name" value="FAD-bd_FR_type"/>
</dbReference>
<dbReference type="InterPro" id="IPR039261">
    <property type="entry name" value="FNR_nucleotide-bd"/>
</dbReference>
<dbReference type="InterPro" id="IPR000971">
    <property type="entry name" value="Globin"/>
</dbReference>
<dbReference type="InterPro" id="IPR009050">
    <property type="entry name" value="Globin-like_sf"/>
</dbReference>
<dbReference type="InterPro" id="IPR012292">
    <property type="entry name" value="Globin/Proto"/>
</dbReference>
<dbReference type="InterPro" id="IPR023950">
    <property type="entry name" value="Hmp"/>
</dbReference>
<dbReference type="InterPro" id="IPR001433">
    <property type="entry name" value="OxRdtase_FAD/NAD-bd"/>
</dbReference>
<dbReference type="InterPro" id="IPR017938">
    <property type="entry name" value="Riboflavin_synthase-like_b-brl"/>
</dbReference>
<dbReference type="NCBIfam" id="NF009805">
    <property type="entry name" value="PRK13289.1"/>
    <property type="match status" value="1"/>
</dbReference>
<dbReference type="PANTHER" id="PTHR43396">
    <property type="entry name" value="FLAVOHEMOPROTEIN"/>
    <property type="match status" value="1"/>
</dbReference>
<dbReference type="PANTHER" id="PTHR43396:SF3">
    <property type="entry name" value="FLAVOHEMOPROTEIN"/>
    <property type="match status" value="1"/>
</dbReference>
<dbReference type="Pfam" id="PF00970">
    <property type="entry name" value="FAD_binding_6"/>
    <property type="match status" value="1"/>
</dbReference>
<dbReference type="Pfam" id="PF00042">
    <property type="entry name" value="Globin"/>
    <property type="match status" value="1"/>
</dbReference>
<dbReference type="Pfam" id="PF00175">
    <property type="entry name" value="NAD_binding_1"/>
    <property type="match status" value="1"/>
</dbReference>
<dbReference type="PRINTS" id="PR00409">
    <property type="entry name" value="PHDIOXRDTASE"/>
</dbReference>
<dbReference type="SUPFAM" id="SSF52343">
    <property type="entry name" value="Ferredoxin reductase-like, C-terminal NADP-linked domain"/>
    <property type="match status" value="1"/>
</dbReference>
<dbReference type="SUPFAM" id="SSF46458">
    <property type="entry name" value="Globin-like"/>
    <property type="match status" value="1"/>
</dbReference>
<dbReference type="SUPFAM" id="SSF63380">
    <property type="entry name" value="Riboflavin synthase domain-like"/>
    <property type="match status" value="1"/>
</dbReference>
<dbReference type="PROSITE" id="PS51384">
    <property type="entry name" value="FAD_FR"/>
    <property type="match status" value="1"/>
</dbReference>
<dbReference type="PROSITE" id="PS01033">
    <property type="entry name" value="GLOBIN"/>
    <property type="match status" value="1"/>
</dbReference>
<name>HMP_PSEPK</name>
<protein>
    <recommendedName>
        <fullName evidence="1">Flavohemoprotein</fullName>
    </recommendedName>
    <alternativeName>
        <fullName evidence="1">Flavohemoglobin</fullName>
    </alternativeName>
    <alternativeName>
        <fullName evidence="1">Hemoglobin-like protein</fullName>
    </alternativeName>
    <alternativeName>
        <fullName evidence="1">Nitric oxide dioxygenase</fullName>
        <shortName evidence="1">NO oxygenase</shortName>
        <shortName evidence="1">NOD</shortName>
        <ecNumber evidence="1">1.14.12.17</ecNumber>
    </alternativeName>
</protein>
<evidence type="ECO:0000255" key="1">
    <source>
        <dbReference type="HAMAP-Rule" id="MF_01252"/>
    </source>
</evidence>
<evidence type="ECO:0000255" key="2">
    <source>
        <dbReference type="PROSITE-ProRule" id="PRU00238"/>
    </source>
</evidence>
<feature type="chain" id="PRO_0000052440" description="Flavohemoprotein">
    <location>
        <begin position="1"/>
        <end position="392"/>
    </location>
</feature>
<feature type="domain" description="Globin" evidence="2">
    <location>
        <begin position="1"/>
        <end position="139"/>
    </location>
</feature>
<feature type="domain" description="FAD-binding FR-type" evidence="1">
    <location>
        <begin position="153"/>
        <end position="256"/>
    </location>
</feature>
<feature type="region of interest" description="Reductase">
    <location>
        <begin position="150"/>
        <end position="392"/>
    </location>
</feature>
<feature type="active site" description="Charge relay system" evidence="1">
    <location>
        <position position="95"/>
    </location>
</feature>
<feature type="active site" description="Charge relay system" evidence="1">
    <location>
        <position position="138"/>
    </location>
</feature>
<feature type="binding site" description="proximal binding residue" evidence="1">
    <location>
        <position position="85"/>
    </location>
    <ligand>
        <name>heme b</name>
        <dbReference type="ChEBI" id="CHEBI:60344"/>
    </ligand>
    <ligandPart>
        <name>Fe</name>
        <dbReference type="ChEBI" id="CHEBI:18248"/>
    </ligandPart>
</feature>
<feature type="binding site" evidence="1">
    <location>
        <position position="191"/>
    </location>
    <ligand>
        <name>FAD</name>
        <dbReference type="ChEBI" id="CHEBI:57692"/>
    </ligand>
</feature>
<feature type="binding site" evidence="1">
    <location>
        <begin position="205"/>
        <end position="208"/>
    </location>
    <ligand>
        <name>FAD</name>
        <dbReference type="ChEBI" id="CHEBI:57692"/>
    </ligand>
</feature>
<feature type="binding site" evidence="1">
    <location>
        <begin position="268"/>
        <end position="273"/>
    </location>
    <ligand>
        <name>NADP(+)</name>
        <dbReference type="ChEBI" id="CHEBI:58349"/>
    </ligand>
</feature>
<feature type="binding site" evidence="1">
    <location>
        <begin position="384"/>
        <end position="387"/>
    </location>
    <ligand>
        <name>FAD</name>
        <dbReference type="ChEBI" id="CHEBI:57692"/>
    </ligand>
</feature>
<feature type="site" description="Involved in heme-bound ligand stabilization and O-O bond activation" evidence="1">
    <location>
        <position position="29"/>
    </location>
</feature>
<feature type="site" description="Influences the redox potential of the prosthetic heme and FAD groups" evidence="1">
    <location>
        <position position="84"/>
    </location>
</feature>
<feature type="site" description="Influences the redox potential of the prosthetic heme and FAD groups" evidence="1">
    <location>
        <position position="383"/>
    </location>
</feature>
<accession>Q88PP0</accession>
<comment type="function">
    <text evidence="1">Is involved in NO detoxification in an aerobic process, termed nitric oxide dioxygenase (NOD) reaction that utilizes O(2) and NAD(P)H to convert NO to nitrate, which protects the bacterium from various noxious nitrogen compounds. Therefore, plays a central role in the inducible response to nitrosative stress.</text>
</comment>
<comment type="catalytic activity">
    <reaction evidence="1">
        <text>2 nitric oxide + NADPH + 2 O2 = 2 nitrate + NADP(+) + H(+)</text>
        <dbReference type="Rhea" id="RHEA:19465"/>
        <dbReference type="ChEBI" id="CHEBI:15378"/>
        <dbReference type="ChEBI" id="CHEBI:15379"/>
        <dbReference type="ChEBI" id="CHEBI:16480"/>
        <dbReference type="ChEBI" id="CHEBI:17632"/>
        <dbReference type="ChEBI" id="CHEBI:57783"/>
        <dbReference type="ChEBI" id="CHEBI:58349"/>
        <dbReference type="EC" id="1.14.12.17"/>
    </reaction>
</comment>
<comment type="catalytic activity">
    <reaction evidence="1">
        <text>2 nitric oxide + NADH + 2 O2 = 2 nitrate + NAD(+) + H(+)</text>
        <dbReference type="Rhea" id="RHEA:19469"/>
        <dbReference type="ChEBI" id="CHEBI:15378"/>
        <dbReference type="ChEBI" id="CHEBI:15379"/>
        <dbReference type="ChEBI" id="CHEBI:16480"/>
        <dbReference type="ChEBI" id="CHEBI:17632"/>
        <dbReference type="ChEBI" id="CHEBI:57540"/>
        <dbReference type="ChEBI" id="CHEBI:57945"/>
        <dbReference type="EC" id="1.14.12.17"/>
    </reaction>
</comment>
<comment type="cofactor">
    <cofactor evidence="1">
        <name>heme b</name>
        <dbReference type="ChEBI" id="CHEBI:60344"/>
    </cofactor>
    <text evidence="1">Binds 1 heme b (iron(II)-protoporphyrin IX) group per subunit.</text>
</comment>
<comment type="cofactor">
    <cofactor evidence="1">
        <name>FAD</name>
        <dbReference type="ChEBI" id="CHEBI:57692"/>
    </cofactor>
    <text evidence="1">Binds 1 FAD per subunit.</text>
</comment>
<comment type="domain">
    <text>Consists of two distinct domains; an N-terminal heme-containing oxygen-binding domain and a C-terminal reductase domain with binding sites for FAD and NAD(P)H.</text>
</comment>
<comment type="similarity">
    <text evidence="1">Belongs to the globin family. Two-domain flavohemoproteins subfamily.</text>
</comment>
<comment type="similarity">
    <text evidence="1">In the C-terminal section; belongs to the flavoprotein pyridine nucleotide cytochrome reductase family.</text>
</comment>
<organism>
    <name type="scientific">Pseudomonas putida (strain ATCC 47054 / DSM 6125 / CFBP 8728 / NCIMB 11950 / KT2440)</name>
    <dbReference type="NCBI Taxonomy" id="160488"/>
    <lineage>
        <taxon>Bacteria</taxon>
        <taxon>Pseudomonadati</taxon>
        <taxon>Pseudomonadota</taxon>
        <taxon>Gammaproteobacteria</taxon>
        <taxon>Pseudomonadales</taxon>
        <taxon>Pseudomonadaceae</taxon>
        <taxon>Pseudomonas</taxon>
    </lineage>
</organism>
<proteinExistence type="inferred from homology"/>
<keyword id="KW-0216">Detoxification</keyword>
<keyword id="KW-0274">FAD</keyword>
<keyword id="KW-0285">Flavoprotein</keyword>
<keyword id="KW-0349">Heme</keyword>
<keyword id="KW-0408">Iron</keyword>
<keyword id="KW-0479">Metal-binding</keyword>
<keyword id="KW-0520">NAD</keyword>
<keyword id="KW-0521">NADP</keyword>
<keyword id="KW-0560">Oxidoreductase</keyword>
<keyword id="KW-0561">Oxygen transport</keyword>
<keyword id="KW-1185">Reference proteome</keyword>
<keyword id="KW-0813">Transport</keyword>